<feature type="chain" id="PRO_1000187451" description="2,3,4,5-tetrahydropyridine-2,6-dicarboxylate N-acetyltransferase">
    <location>
        <begin position="1"/>
        <end position="236"/>
    </location>
</feature>
<proteinExistence type="inferred from homology"/>
<dbReference type="EC" id="2.3.1.89" evidence="1"/>
<dbReference type="EMBL" id="CP001581">
    <property type="protein sequence ID" value="ACO85618.1"/>
    <property type="molecule type" value="Genomic_DNA"/>
</dbReference>
<dbReference type="SMR" id="C1FL32"/>
<dbReference type="KEGG" id="cby:CLM_3568"/>
<dbReference type="eggNOG" id="COG2171">
    <property type="taxonomic scope" value="Bacteria"/>
</dbReference>
<dbReference type="HOGENOM" id="CLU_103751_0_0_9"/>
<dbReference type="UniPathway" id="UPA00034">
    <property type="reaction ID" value="UER00022"/>
</dbReference>
<dbReference type="Proteomes" id="UP000001374">
    <property type="component" value="Chromosome"/>
</dbReference>
<dbReference type="GO" id="GO:0047200">
    <property type="term" value="F:tetrahydrodipicolinate N-acetyltransferase activity"/>
    <property type="evidence" value="ECO:0007669"/>
    <property type="project" value="UniProtKB-EC"/>
</dbReference>
<dbReference type="GO" id="GO:0019877">
    <property type="term" value="P:diaminopimelate biosynthetic process"/>
    <property type="evidence" value="ECO:0007669"/>
    <property type="project" value="UniProtKB-UniRule"/>
</dbReference>
<dbReference type="GO" id="GO:0009089">
    <property type="term" value="P:lysine biosynthetic process via diaminopimelate"/>
    <property type="evidence" value="ECO:0007669"/>
    <property type="project" value="UniProtKB-UniRule"/>
</dbReference>
<dbReference type="CDD" id="cd03350">
    <property type="entry name" value="LbH_THP_succinylT"/>
    <property type="match status" value="1"/>
</dbReference>
<dbReference type="Gene3D" id="2.160.10.10">
    <property type="entry name" value="Hexapeptide repeat proteins"/>
    <property type="match status" value="1"/>
</dbReference>
<dbReference type="Gene3D" id="3.30.70.250">
    <property type="entry name" value="Malonyl-CoA ACP transacylase, ACP-binding"/>
    <property type="match status" value="1"/>
</dbReference>
<dbReference type="HAMAP" id="MF_01691">
    <property type="entry name" value="DapH"/>
    <property type="match status" value="1"/>
</dbReference>
<dbReference type="InterPro" id="IPR019873">
    <property type="entry name" value="DapH"/>
</dbReference>
<dbReference type="InterPro" id="IPR013710">
    <property type="entry name" value="DapH_N"/>
</dbReference>
<dbReference type="InterPro" id="IPR001451">
    <property type="entry name" value="Hexapep"/>
</dbReference>
<dbReference type="InterPro" id="IPR018357">
    <property type="entry name" value="Hexapep_transf_CS"/>
</dbReference>
<dbReference type="InterPro" id="IPR050179">
    <property type="entry name" value="Trans_hexapeptide_repeat"/>
</dbReference>
<dbReference type="InterPro" id="IPR011004">
    <property type="entry name" value="Trimer_LpxA-like_sf"/>
</dbReference>
<dbReference type="NCBIfam" id="TIGR03532">
    <property type="entry name" value="DapD_Ac"/>
    <property type="match status" value="1"/>
</dbReference>
<dbReference type="PANTHER" id="PTHR43300:SF10">
    <property type="entry name" value="2,3,4,5-TETRAHYDROPYRIDINE-2,6-DICARBOXYLATE N-ACETYLTRANSFERASE"/>
    <property type="match status" value="1"/>
</dbReference>
<dbReference type="PANTHER" id="PTHR43300">
    <property type="entry name" value="ACETYLTRANSFERASE"/>
    <property type="match status" value="1"/>
</dbReference>
<dbReference type="Pfam" id="PF08503">
    <property type="entry name" value="DapH_N"/>
    <property type="match status" value="1"/>
</dbReference>
<dbReference type="Pfam" id="PF14602">
    <property type="entry name" value="Hexapep_2"/>
    <property type="match status" value="2"/>
</dbReference>
<dbReference type="SUPFAM" id="SSF51161">
    <property type="entry name" value="Trimeric LpxA-like enzymes"/>
    <property type="match status" value="1"/>
</dbReference>
<dbReference type="PROSITE" id="PS00101">
    <property type="entry name" value="HEXAPEP_TRANSFERASES"/>
    <property type="match status" value="1"/>
</dbReference>
<sequence>MSYNLTDPYEIARYIKEAKKSTPIKAYIEGDLSNCDFTNIEKFNSGDLYILFGESEEILVIIEKNKDKIKNCRIEQDRRKSAIPLLDMLKINARIEPGATIRDKVIIGENAVIMMGAVVNIGAEIGEGTMVDMNAVVGARGKLGKNVHLGAGAVVAGVLEPPSSDPCTIEDNVLIGANAVILEGIKIGKGSVVAAGSIVTTDVPENVVVAGAPAKIIKEVDVKTKDKTKLLDDLRK</sequence>
<comment type="function">
    <text evidence="1">Catalyzes the transfer of an acetyl group from acetyl-CoA to tetrahydrodipicolinate.</text>
</comment>
<comment type="catalytic activity">
    <reaction evidence="1">
        <text>(S)-2,3,4,5-tetrahydrodipicolinate + acetyl-CoA + H2O = L-2-acetamido-6-oxoheptanedioate + CoA</text>
        <dbReference type="Rhea" id="RHEA:13085"/>
        <dbReference type="ChEBI" id="CHEBI:15377"/>
        <dbReference type="ChEBI" id="CHEBI:16845"/>
        <dbReference type="ChEBI" id="CHEBI:57287"/>
        <dbReference type="ChEBI" id="CHEBI:57288"/>
        <dbReference type="ChEBI" id="CHEBI:58117"/>
        <dbReference type="EC" id="2.3.1.89"/>
    </reaction>
</comment>
<comment type="pathway">
    <text evidence="1">Amino-acid biosynthesis; L-lysine biosynthesis via DAP pathway; LL-2,6-diaminopimelate from (S)-tetrahydrodipicolinate (acetylase route): step 1/3.</text>
</comment>
<comment type="similarity">
    <text evidence="1">Belongs to the transferase hexapeptide repeat family. DapH subfamily.</text>
</comment>
<reference key="1">
    <citation type="submission" date="2008-10" db="EMBL/GenBank/DDBJ databases">
        <title>Genome sequence of Clostridium botulinum A2 Kyoto.</title>
        <authorList>
            <person name="Shrivastava S."/>
            <person name="Brinkac L.M."/>
            <person name="Brown J.L."/>
            <person name="Bruce D."/>
            <person name="Detter C.C."/>
            <person name="Johnson E.A."/>
            <person name="Munk C.A."/>
            <person name="Smith L.A."/>
            <person name="Smith T.J."/>
            <person name="Sutton G."/>
            <person name="Brettin T.S."/>
        </authorList>
    </citation>
    <scope>NUCLEOTIDE SEQUENCE [LARGE SCALE GENOMIC DNA]</scope>
    <source>
        <strain>Kyoto / Type A2</strain>
    </source>
</reference>
<protein>
    <recommendedName>
        <fullName evidence="1">2,3,4,5-tetrahydropyridine-2,6-dicarboxylate N-acetyltransferase</fullName>
        <ecNumber evidence="1">2.3.1.89</ecNumber>
    </recommendedName>
    <alternativeName>
        <fullName evidence="1">Tetrahydrodipicolinate N-acetyltransferase</fullName>
        <shortName evidence="1">THP acetyltransferase</shortName>
        <shortName evidence="1">Tetrahydropicolinate acetylase</shortName>
    </alternativeName>
</protein>
<evidence type="ECO:0000255" key="1">
    <source>
        <dbReference type="HAMAP-Rule" id="MF_01691"/>
    </source>
</evidence>
<organism>
    <name type="scientific">Clostridium botulinum (strain Kyoto / Type A2)</name>
    <dbReference type="NCBI Taxonomy" id="536232"/>
    <lineage>
        <taxon>Bacteria</taxon>
        <taxon>Bacillati</taxon>
        <taxon>Bacillota</taxon>
        <taxon>Clostridia</taxon>
        <taxon>Eubacteriales</taxon>
        <taxon>Clostridiaceae</taxon>
        <taxon>Clostridium</taxon>
    </lineage>
</organism>
<gene>
    <name evidence="1" type="primary">dapH</name>
    <name type="ordered locus">CLM_3568</name>
</gene>
<accession>C1FL32</accession>
<name>DAPH_CLOBJ</name>
<keyword id="KW-0012">Acyltransferase</keyword>
<keyword id="KW-0028">Amino-acid biosynthesis</keyword>
<keyword id="KW-0220">Diaminopimelate biosynthesis</keyword>
<keyword id="KW-0457">Lysine biosynthesis</keyword>
<keyword id="KW-0677">Repeat</keyword>
<keyword id="KW-0808">Transferase</keyword>